<proteinExistence type="inferred from homology"/>
<protein>
    <recommendedName>
        <fullName evidence="1">Leucyl/phenylalanyl-tRNA--protein transferase</fullName>
        <ecNumber evidence="1">2.3.2.6</ecNumber>
    </recommendedName>
    <alternativeName>
        <fullName evidence="1">L/F-transferase</fullName>
    </alternativeName>
    <alternativeName>
        <fullName evidence="1">Leucyltransferase</fullName>
    </alternativeName>
    <alternativeName>
        <fullName evidence="1">Phenyalanyltransferase</fullName>
    </alternativeName>
</protein>
<keyword id="KW-0012">Acyltransferase</keyword>
<keyword id="KW-0963">Cytoplasm</keyword>
<keyword id="KW-0808">Transferase</keyword>
<dbReference type="EC" id="2.3.2.6" evidence="1"/>
<dbReference type="EMBL" id="CP000446">
    <property type="protein sequence ID" value="ABI38727.1"/>
    <property type="molecule type" value="Genomic_DNA"/>
</dbReference>
<dbReference type="RefSeq" id="WP_011622428.1">
    <property type="nucleotide sequence ID" value="NC_008321.1"/>
</dbReference>
<dbReference type="SMR" id="Q0HJP0"/>
<dbReference type="KEGG" id="she:Shewmr4_1651"/>
<dbReference type="HOGENOM" id="CLU_075045_0_0_6"/>
<dbReference type="GO" id="GO:0005737">
    <property type="term" value="C:cytoplasm"/>
    <property type="evidence" value="ECO:0007669"/>
    <property type="project" value="UniProtKB-SubCell"/>
</dbReference>
<dbReference type="GO" id="GO:0008914">
    <property type="term" value="F:leucyl-tRNA--protein transferase activity"/>
    <property type="evidence" value="ECO:0007669"/>
    <property type="project" value="UniProtKB-UniRule"/>
</dbReference>
<dbReference type="GO" id="GO:0030163">
    <property type="term" value="P:protein catabolic process"/>
    <property type="evidence" value="ECO:0007669"/>
    <property type="project" value="UniProtKB-UniRule"/>
</dbReference>
<dbReference type="FunFam" id="3.30.70.3550:FF:000001">
    <property type="entry name" value="Leucyl/phenylalanyl-tRNA--protein transferase"/>
    <property type="match status" value="1"/>
</dbReference>
<dbReference type="FunFam" id="3.40.630.70:FF:000007">
    <property type="entry name" value="Leucyl/phenylalanyl-tRNA--protein transferase"/>
    <property type="match status" value="1"/>
</dbReference>
<dbReference type="Gene3D" id="3.40.630.70">
    <property type="entry name" value="Leucyl/phenylalanyl-tRNA-protein transferase, C-terminal domain"/>
    <property type="match status" value="1"/>
</dbReference>
<dbReference type="Gene3D" id="3.30.70.3550">
    <property type="entry name" value="Leucyl/phenylalanyl-tRNA-protein transferase, N-terminal domain"/>
    <property type="match status" value="1"/>
</dbReference>
<dbReference type="HAMAP" id="MF_00688">
    <property type="entry name" value="Leu_Phe_trans"/>
    <property type="match status" value="1"/>
</dbReference>
<dbReference type="InterPro" id="IPR016181">
    <property type="entry name" value="Acyl_CoA_acyltransferase"/>
</dbReference>
<dbReference type="InterPro" id="IPR004616">
    <property type="entry name" value="Leu/Phe-tRNA_Trfase"/>
</dbReference>
<dbReference type="InterPro" id="IPR042203">
    <property type="entry name" value="Leu/Phe-tRNA_Trfase_C"/>
</dbReference>
<dbReference type="InterPro" id="IPR042221">
    <property type="entry name" value="Leu/Phe-tRNA_Trfase_N"/>
</dbReference>
<dbReference type="NCBIfam" id="TIGR00667">
    <property type="entry name" value="aat"/>
    <property type="match status" value="1"/>
</dbReference>
<dbReference type="PANTHER" id="PTHR30098">
    <property type="entry name" value="LEUCYL/PHENYLALANYL-TRNA--PROTEIN TRANSFERASE"/>
    <property type="match status" value="1"/>
</dbReference>
<dbReference type="PANTHER" id="PTHR30098:SF2">
    <property type="entry name" value="LEUCYL_PHENYLALANYL-TRNA--PROTEIN TRANSFERASE"/>
    <property type="match status" value="1"/>
</dbReference>
<dbReference type="Pfam" id="PF03588">
    <property type="entry name" value="Leu_Phe_trans"/>
    <property type="match status" value="1"/>
</dbReference>
<dbReference type="SUPFAM" id="SSF55729">
    <property type="entry name" value="Acyl-CoA N-acyltransferases (Nat)"/>
    <property type="match status" value="1"/>
</dbReference>
<organism>
    <name type="scientific">Shewanella sp. (strain MR-4)</name>
    <dbReference type="NCBI Taxonomy" id="60480"/>
    <lineage>
        <taxon>Bacteria</taxon>
        <taxon>Pseudomonadati</taxon>
        <taxon>Pseudomonadota</taxon>
        <taxon>Gammaproteobacteria</taxon>
        <taxon>Alteromonadales</taxon>
        <taxon>Shewanellaceae</taxon>
        <taxon>Shewanella</taxon>
    </lineage>
</organism>
<comment type="function">
    <text evidence="1">Functions in the N-end rule pathway of protein degradation where it conjugates Leu, Phe and, less efficiently, Met from aminoacyl-tRNAs to the N-termini of proteins containing an N-terminal arginine or lysine.</text>
</comment>
<comment type="catalytic activity">
    <reaction evidence="1">
        <text>N-terminal L-lysyl-[protein] + L-leucyl-tRNA(Leu) = N-terminal L-leucyl-L-lysyl-[protein] + tRNA(Leu) + H(+)</text>
        <dbReference type="Rhea" id="RHEA:12340"/>
        <dbReference type="Rhea" id="RHEA-COMP:9613"/>
        <dbReference type="Rhea" id="RHEA-COMP:9622"/>
        <dbReference type="Rhea" id="RHEA-COMP:12670"/>
        <dbReference type="Rhea" id="RHEA-COMP:12671"/>
        <dbReference type="ChEBI" id="CHEBI:15378"/>
        <dbReference type="ChEBI" id="CHEBI:65249"/>
        <dbReference type="ChEBI" id="CHEBI:78442"/>
        <dbReference type="ChEBI" id="CHEBI:78494"/>
        <dbReference type="ChEBI" id="CHEBI:133043"/>
        <dbReference type="EC" id="2.3.2.6"/>
    </reaction>
</comment>
<comment type="catalytic activity">
    <reaction evidence="1">
        <text>N-terminal L-arginyl-[protein] + L-leucyl-tRNA(Leu) = N-terminal L-leucyl-L-arginyl-[protein] + tRNA(Leu) + H(+)</text>
        <dbReference type="Rhea" id="RHEA:50416"/>
        <dbReference type="Rhea" id="RHEA-COMP:9613"/>
        <dbReference type="Rhea" id="RHEA-COMP:9622"/>
        <dbReference type="Rhea" id="RHEA-COMP:12672"/>
        <dbReference type="Rhea" id="RHEA-COMP:12673"/>
        <dbReference type="ChEBI" id="CHEBI:15378"/>
        <dbReference type="ChEBI" id="CHEBI:64719"/>
        <dbReference type="ChEBI" id="CHEBI:78442"/>
        <dbReference type="ChEBI" id="CHEBI:78494"/>
        <dbReference type="ChEBI" id="CHEBI:133044"/>
        <dbReference type="EC" id="2.3.2.6"/>
    </reaction>
</comment>
<comment type="catalytic activity">
    <reaction evidence="1">
        <text>L-phenylalanyl-tRNA(Phe) + an N-terminal L-alpha-aminoacyl-[protein] = an N-terminal L-phenylalanyl-L-alpha-aminoacyl-[protein] + tRNA(Phe)</text>
        <dbReference type="Rhea" id="RHEA:43632"/>
        <dbReference type="Rhea" id="RHEA-COMP:9668"/>
        <dbReference type="Rhea" id="RHEA-COMP:9699"/>
        <dbReference type="Rhea" id="RHEA-COMP:10636"/>
        <dbReference type="Rhea" id="RHEA-COMP:10637"/>
        <dbReference type="ChEBI" id="CHEBI:78442"/>
        <dbReference type="ChEBI" id="CHEBI:78531"/>
        <dbReference type="ChEBI" id="CHEBI:78597"/>
        <dbReference type="ChEBI" id="CHEBI:83561"/>
        <dbReference type="EC" id="2.3.2.6"/>
    </reaction>
</comment>
<comment type="subcellular location">
    <subcellularLocation>
        <location evidence="1">Cytoplasm</location>
    </subcellularLocation>
</comment>
<comment type="similarity">
    <text evidence="1">Belongs to the L/F-transferase family.</text>
</comment>
<reference key="1">
    <citation type="submission" date="2006-08" db="EMBL/GenBank/DDBJ databases">
        <title>Complete sequence of Shewanella sp. MR-4.</title>
        <authorList>
            <consortium name="US DOE Joint Genome Institute"/>
            <person name="Copeland A."/>
            <person name="Lucas S."/>
            <person name="Lapidus A."/>
            <person name="Barry K."/>
            <person name="Detter J.C."/>
            <person name="Glavina del Rio T."/>
            <person name="Hammon N."/>
            <person name="Israni S."/>
            <person name="Dalin E."/>
            <person name="Tice H."/>
            <person name="Pitluck S."/>
            <person name="Kiss H."/>
            <person name="Brettin T."/>
            <person name="Bruce D."/>
            <person name="Han C."/>
            <person name="Tapia R."/>
            <person name="Gilna P."/>
            <person name="Schmutz J."/>
            <person name="Larimer F."/>
            <person name="Land M."/>
            <person name="Hauser L."/>
            <person name="Kyrpides N."/>
            <person name="Mikhailova N."/>
            <person name="Nealson K."/>
            <person name="Konstantinidis K."/>
            <person name="Klappenbach J."/>
            <person name="Tiedje J."/>
            <person name="Richardson P."/>
        </authorList>
    </citation>
    <scope>NUCLEOTIDE SEQUENCE [LARGE SCALE GENOMIC DNA]</scope>
    <source>
        <strain>MR-4</strain>
    </source>
</reference>
<name>LFTR_SHESM</name>
<feature type="chain" id="PRO_0000304360" description="Leucyl/phenylalanyl-tRNA--protein transferase">
    <location>
        <begin position="1"/>
        <end position="236"/>
    </location>
</feature>
<gene>
    <name evidence="1" type="primary">aat</name>
    <name type="ordered locus">Shewmr4_1651</name>
</gene>
<sequence>MNSLSFLNHEFEAFPSPELALTDPNGLLAIGGDLRPERLLTAYYHGIFPWFNADDPILWWSPDPRAIFIPGQVNISTSLRKYLKKQPWRFTINHAFTDVMAGCAQPRRKQAGTWITHEIQMAYRELHHNGHAHSVEVWHGERLIGGLYGLAIGQVFCGESMFHRETNASKAAMLLLQQHLINMDFKLIDAQVMNPHLESLGAKPVKRANFIQLLTQFRDNTANPAAWIPSEVTLEL</sequence>
<accession>Q0HJP0</accession>
<evidence type="ECO:0000255" key="1">
    <source>
        <dbReference type="HAMAP-Rule" id="MF_00688"/>
    </source>
</evidence>